<protein>
    <recommendedName>
        <fullName evidence="1">dCTP deaminase</fullName>
        <ecNumber evidence="1">3.5.4.13</ecNumber>
    </recommendedName>
    <alternativeName>
        <fullName evidence="1">Deoxycytidine triphosphate deaminase</fullName>
    </alternativeName>
</protein>
<keyword id="KW-0378">Hydrolase</keyword>
<keyword id="KW-0546">Nucleotide metabolism</keyword>
<keyword id="KW-0547">Nucleotide-binding</keyword>
<keyword id="KW-1185">Reference proteome</keyword>
<comment type="function">
    <text evidence="1">Catalyzes the deamination of dCTP to dUTP.</text>
</comment>
<comment type="catalytic activity">
    <reaction evidence="1">
        <text>dCTP + H2O + H(+) = dUTP + NH4(+)</text>
        <dbReference type="Rhea" id="RHEA:22680"/>
        <dbReference type="ChEBI" id="CHEBI:15377"/>
        <dbReference type="ChEBI" id="CHEBI:15378"/>
        <dbReference type="ChEBI" id="CHEBI:28938"/>
        <dbReference type="ChEBI" id="CHEBI:61481"/>
        <dbReference type="ChEBI" id="CHEBI:61555"/>
        <dbReference type="EC" id="3.5.4.13"/>
    </reaction>
</comment>
<comment type="pathway">
    <text evidence="1">Pyrimidine metabolism; dUMP biosynthesis; dUMP from dCTP (dUTP route): step 1/2.</text>
</comment>
<comment type="subunit">
    <text evidence="1">Homotrimer.</text>
</comment>
<comment type="similarity">
    <text evidence="1">Belongs to the dCTP deaminase family.</text>
</comment>
<organism>
    <name type="scientific">Shewanella loihica (strain ATCC BAA-1088 / PV-4)</name>
    <dbReference type="NCBI Taxonomy" id="323850"/>
    <lineage>
        <taxon>Bacteria</taxon>
        <taxon>Pseudomonadati</taxon>
        <taxon>Pseudomonadota</taxon>
        <taxon>Gammaproteobacteria</taxon>
        <taxon>Alteromonadales</taxon>
        <taxon>Shewanellaceae</taxon>
        <taxon>Shewanella</taxon>
    </lineage>
</organism>
<gene>
    <name evidence="1" type="primary">dcd</name>
    <name type="ordered locus">Shew_1576</name>
</gene>
<sequence>MRLTDLEIAACLEEGSIVIDPRPDAEAISGVSVDVKLGNQFRVFQDHTAPYIDLSGPSSEVQEALDRVMSDKIVIPEGEAFFLHPGELALAVTHESLTLPADIVGWLDGRSSLARLGLMVHVTAHRIDPGWQGKIVLEFFNSGKLPLALKPMMTIGALNFERLSSPVARPYNKRKSAKYRDQQEAVASRISQDK</sequence>
<name>DCD_SHELP</name>
<evidence type="ECO:0000255" key="1">
    <source>
        <dbReference type="HAMAP-Rule" id="MF_00146"/>
    </source>
</evidence>
<evidence type="ECO:0000256" key="2">
    <source>
        <dbReference type="SAM" id="MobiDB-lite"/>
    </source>
</evidence>
<dbReference type="EC" id="3.5.4.13" evidence="1"/>
<dbReference type="EMBL" id="CP000606">
    <property type="protein sequence ID" value="ABO23443.1"/>
    <property type="molecule type" value="Genomic_DNA"/>
</dbReference>
<dbReference type="RefSeq" id="WP_011865375.1">
    <property type="nucleotide sequence ID" value="NC_009092.1"/>
</dbReference>
<dbReference type="SMR" id="A3QD95"/>
<dbReference type="STRING" id="323850.Shew_1576"/>
<dbReference type="KEGG" id="slo:Shew_1576"/>
<dbReference type="eggNOG" id="COG0717">
    <property type="taxonomic scope" value="Bacteria"/>
</dbReference>
<dbReference type="HOGENOM" id="CLU_087476_2_0_6"/>
<dbReference type="OrthoDB" id="9780956at2"/>
<dbReference type="UniPathway" id="UPA00610">
    <property type="reaction ID" value="UER00665"/>
</dbReference>
<dbReference type="Proteomes" id="UP000001558">
    <property type="component" value="Chromosome"/>
</dbReference>
<dbReference type="GO" id="GO:0008829">
    <property type="term" value="F:dCTP deaminase activity"/>
    <property type="evidence" value="ECO:0007669"/>
    <property type="project" value="UniProtKB-UniRule"/>
</dbReference>
<dbReference type="GO" id="GO:0000166">
    <property type="term" value="F:nucleotide binding"/>
    <property type="evidence" value="ECO:0007669"/>
    <property type="project" value="UniProtKB-KW"/>
</dbReference>
<dbReference type="GO" id="GO:0006226">
    <property type="term" value="P:dUMP biosynthetic process"/>
    <property type="evidence" value="ECO:0007669"/>
    <property type="project" value="UniProtKB-UniPathway"/>
</dbReference>
<dbReference type="GO" id="GO:0006229">
    <property type="term" value="P:dUTP biosynthetic process"/>
    <property type="evidence" value="ECO:0007669"/>
    <property type="project" value="UniProtKB-UniRule"/>
</dbReference>
<dbReference type="GO" id="GO:0015949">
    <property type="term" value="P:nucleobase-containing small molecule interconversion"/>
    <property type="evidence" value="ECO:0007669"/>
    <property type="project" value="TreeGrafter"/>
</dbReference>
<dbReference type="CDD" id="cd07557">
    <property type="entry name" value="trimeric_dUTPase"/>
    <property type="match status" value="1"/>
</dbReference>
<dbReference type="FunFam" id="2.70.40.10:FF:000003">
    <property type="entry name" value="dCTP deaminase"/>
    <property type="match status" value="1"/>
</dbReference>
<dbReference type="Gene3D" id="2.70.40.10">
    <property type="match status" value="1"/>
</dbReference>
<dbReference type="HAMAP" id="MF_00146">
    <property type="entry name" value="dCTP_deaminase"/>
    <property type="match status" value="1"/>
</dbReference>
<dbReference type="InterPro" id="IPR011962">
    <property type="entry name" value="dCTP_deaminase"/>
</dbReference>
<dbReference type="InterPro" id="IPR036157">
    <property type="entry name" value="dUTPase-like_sf"/>
</dbReference>
<dbReference type="InterPro" id="IPR033704">
    <property type="entry name" value="dUTPase_trimeric"/>
</dbReference>
<dbReference type="NCBIfam" id="TIGR02274">
    <property type="entry name" value="dCTP_deam"/>
    <property type="match status" value="1"/>
</dbReference>
<dbReference type="PANTHER" id="PTHR42680">
    <property type="entry name" value="DCTP DEAMINASE"/>
    <property type="match status" value="1"/>
</dbReference>
<dbReference type="PANTHER" id="PTHR42680:SF3">
    <property type="entry name" value="DCTP DEAMINASE"/>
    <property type="match status" value="1"/>
</dbReference>
<dbReference type="Pfam" id="PF22769">
    <property type="entry name" value="DCD"/>
    <property type="match status" value="1"/>
</dbReference>
<dbReference type="SUPFAM" id="SSF51283">
    <property type="entry name" value="dUTPase-like"/>
    <property type="match status" value="1"/>
</dbReference>
<reference key="1">
    <citation type="submission" date="2007-03" db="EMBL/GenBank/DDBJ databases">
        <title>Complete sequence of Shewanella loihica PV-4.</title>
        <authorList>
            <consortium name="US DOE Joint Genome Institute"/>
            <person name="Copeland A."/>
            <person name="Lucas S."/>
            <person name="Lapidus A."/>
            <person name="Barry K."/>
            <person name="Detter J.C."/>
            <person name="Glavina del Rio T."/>
            <person name="Hammon N."/>
            <person name="Israni S."/>
            <person name="Dalin E."/>
            <person name="Tice H."/>
            <person name="Pitluck S."/>
            <person name="Chain P."/>
            <person name="Malfatti S."/>
            <person name="Shin M."/>
            <person name="Vergez L."/>
            <person name="Schmutz J."/>
            <person name="Larimer F."/>
            <person name="Land M."/>
            <person name="Hauser L."/>
            <person name="Kyrpides N."/>
            <person name="Mikhailova N."/>
            <person name="Romine M.F."/>
            <person name="Serres G."/>
            <person name="Fredrickson J."/>
            <person name="Tiedje J."/>
            <person name="Richardson P."/>
        </authorList>
    </citation>
    <scope>NUCLEOTIDE SEQUENCE [LARGE SCALE GENOMIC DNA]</scope>
    <source>
        <strain>ATCC BAA-1088 / PV-4</strain>
    </source>
</reference>
<feature type="chain" id="PRO_1000009810" description="dCTP deaminase">
    <location>
        <begin position="1"/>
        <end position="194"/>
    </location>
</feature>
<feature type="region of interest" description="Disordered" evidence="2">
    <location>
        <begin position="172"/>
        <end position="194"/>
    </location>
</feature>
<feature type="active site" description="Proton donor/acceptor" evidence="1">
    <location>
        <position position="138"/>
    </location>
</feature>
<feature type="binding site" evidence="1">
    <location>
        <begin position="110"/>
        <end position="115"/>
    </location>
    <ligand>
        <name>dCTP</name>
        <dbReference type="ChEBI" id="CHEBI:61481"/>
    </ligand>
</feature>
<feature type="binding site" evidence="1">
    <location>
        <position position="128"/>
    </location>
    <ligand>
        <name>dCTP</name>
        <dbReference type="ChEBI" id="CHEBI:61481"/>
    </ligand>
</feature>
<feature type="binding site" evidence="1">
    <location>
        <begin position="136"/>
        <end position="138"/>
    </location>
    <ligand>
        <name>dCTP</name>
        <dbReference type="ChEBI" id="CHEBI:61481"/>
    </ligand>
</feature>
<feature type="binding site" evidence="1">
    <location>
        <position position="171"/>
    </location>
    <ligand>
        <name>dCTP</name>
        <dbReference type="ChEBI" id="CHEBI:61481"/>
    </ligand>
</feature>
<feature type="binding site" evidence="1">
    <location>
        <position position="178"/>
    </location>
    <ligand>
        <name>dCTP</name>
        <dbReference type="ChEBI" id="CHEBI:61481"/>
    </ligand>
</feature>
<feature type="binding site" evidence="1">
    <location>
        <position position="182"/>
    </location>
    <ligand>
        <name>dCTP</name>
        <dbReference type="ChEBI" id="CHEBI:61481"/>
    </ligand>
</feature>
<proteinExistence type="inferred from homology"/>
<accession>A3QD95</accession>